<keyword id="KW-0067">ATP-binding</keyword>
<keyword id="KW-0173">Coenzyme A biosynthesis</keyword>
<keyword id="KW-0963">Cytoplasm</keyword>
<keyword id="KW-0418">Kinase</keyword>
<keyword id="KW-0479">Metal-binding</keyword>
<keyword id="KW-0547">Nucleotide-binding</keyword>
<keyword id="KW-0630">Potassium</keyword>
<keyword id="KW-0808">Transferase</keyword>
<name>COAX_LEPIC</name>
<proteinExistence type="inferred from homology"/>
<dbReference type="EC" id="2.7.1.33" evidence="1"/>
<dbReference type="EMBL" id="AE016823">
    <property type="protein sequence ID" value="AAS71346.1"/>
    <property type="molecule type" value="Genomic_DNA"/>
</dbReference>
<dbReference type="RefSeq" id="WP_000928025.1">
    <property type="nucleotide sequence ID" value="NC_005823.1"/>
</dbReference>
<dbReference type="SMR" id="Q72NP0"/>
<dbReference type="KEGG" id="lic:LIC_12792"/>
<dbReference type="HOGENOM" id="CLU_066627_1_0_12"/>
<dbReference type="UniPathway" id="UPA00241">
    <property type="reaction ID" value="UER00352"/>
</dbReference>
<dbReference type="Proteomes" id="UP000007037">
    <property type="component" value="Chromosome I"/>
</dbReference>
<dbReference type="GO" id="GO:0005737">
    <property type="term" value="C:cytoplasm"/>
    <property type="evidence" value="ECO:0007669"/>
    <property type="project" value="UniProtKB-SubCell"/>
</dbReference>
<dbReference type="GO" id="GO:0005524">
    <property type="term" value="F:ATP binding"/>
    <property type="evidence" value="ECO:0007669"/>
    <property type="project" value="UniProtKB-UniRule"/>
</dbReference>
<dbReference type="GO" id="GO:0046872">
    <property type="term" value="F:metal ion binding"/>
    <property type="evidence" value="ECO:0007669"/>
    <property type="project" value="UniProtKB-KW"/>
</dbReference>
<dbReference type="GO" id="GO:0004594">
    <property type="term" value="F:pantothenate kinase activity"/>
    <property type="evidence" value="ECO:0007669"/>
    <property type="project" value="UniProtKB-UniRule"/>
</dbReference>
<dbReference type="GO" id="GO:0015937">
    <property type="term" value="P:coenzyme A biosynthetic process"/>
    <property type="evidence" value="ECO:0007669"/>
    <property type="project" value="UniProtKB-UniRule"/>
</dbReference>
<dbReference type="CDD" id="cd24015">
    <property type="entry name" value="ASKHA_NBD_PanK-III"/>
    <property type="match status" value="1"/>
</dbReference>
<dbReference type="Gene3D" id="3.30.420.40">
    <property type="match status" value="2"/>
</dbReference>
<dbReference type="HAMAP" id="MF_01274">
    <property type="entry name" value="Pantothen_kinase_3"/>
    <property type="match status" value="1"/>
</dbReference>
<dbReference type="InterPro" id="IPR043129">
    <property type="entry name" value="ATPase_NBD"/>
</dbReference>
<dbReference type="InterPro" id="IPR004619">
    <property type="entry name" value="Type_III_PanK"/>
</dbReference>
<dbReference type="NCBIfam" id="TIGR00671">
    <property type="entry name" value="baf"/>
    <property type="match status" value="1"/>
</dbReference>
<dbReference type="NCBIfam" id="NF009848">
    <property type="entry name" value="PRK13318.1-6"/>
    <property type="match status" value="1"/>
</dbReference>
<dbReference type="NCBIfam" id="NF009855">
    <property type="entry name" value="PRK13321.1"/>
    <property type="match status" value="1"/>
</dbReference>
<dbReference type="PANTHER" id="PTHR34265">
    <property type="entry name" value="TYPE III PANTOTHENATE KINASE"/>
    <property type="match status" value="1"/>
</dbReference>
<dbReference type="PANTHER" id="PTHR34265:SF1">
    <property type="entry name" value="TYPE III PANTOTHENATE KINASE"/>
    <property type="match status" value="1"/>
</dbReference>
<dbReference type="Pfam" id="PF03309">
    <property type="entry name" value="Pan_kinase"/>
    <property type="match status" value="1"/>
</dbReference>
<dbReference type="SUPFAM" id="SSF53067">
    <property type="entry name" value="Actin-like ATPase domain"/>
    <property type="match status" value="2"/>
</dbReference>
<sequence>MLLVVDVGNTNTVFGIFENGNKIPLFHKRTVTRKDRTSDELGLFFRGFLREFKIENEMITGGIYSSVVPTLNPILDRMFQDWFKIEAIRVHYQMKLPFSISYPRPYEIGADRLVNAATCAIDFPGKSIIIDLGTATTFCVVNEKPEYLGGVIAPGLKVSMDALTRNTSQLPPIVFQSPGKILGDSTIESIQAGFFFGWIGLLEGIIREIKKDKGQDYQVIGTGGLVTVIDAAHPGIFDKIDPLLTLRGLQILHLMNS</sequence>
<protein>
    <recommendedName>
        <fullName evidence="1">Type III pantothenate kinase</fullName>
        <ecNumber evidence="1">2.7.1.33</ecNumber>
    </recommendedName>
    <alternativeName>
        <fullName evidence="1">PanK-III</fullName>
    </alternativeName>
    <alternativeName>
        <fullName evidence="1">Pantothenic acid kinase</fullName>
    </alternativeName>
</protein>
<comment type="function">
    <text evidence="1">Catalyzes the phosphorylation of pantothenate (Pan), the first step in CoA biosynthesis.</text>
</comment>
<comment type="catalytic activity">
    <reaction evidence="1">
        <text>(R)-pantothenate + ATP = (R)-4'-phosphopantothenate + ADP + H(+)</text>
        <dbReference type="Rhea" id="RHEA:16373"/>
        <dbReference type="ChEBI" id="CHEBI:10986"/>
        <dbReference type="ChEBI" id="CHEBI:15378"/>
        <dbReference type="ChEBI" id="CHEBI:29032"/>
        <dbReference type="ChEBI" id="CHEBI:30616"/>
        <dbReference type="ChEBI" id="CHEBI:456216"/>
        <dbReference type="EC" id="2.7.1.33"/>
    </reaction>
</comment>
<comment type="cofactor">
    <cofactor evidence="1">
        <name>NH4(+)</name>
        <dbReference type="ChEBI" id="CHEBI:28938"/>
    </cofactor>
    <cofactor evidence="1">
        <name>K(+)</name>
        <dbReference type="ChEBI" id="CHEBI:29103"/>
    </cofactor>
    <text evidence="1">A monovalent cation. Ammonium or potassium.</text>
</comment>
<comment type="pathway">
    <text evidence="1">Cofactor biosynthesis; coenzyme A biosynthesis; CoA from (R)-pantothenate: step 1/5.</text>
</comment>
<comment type="subunit">
    <text evidence="1">Homodimer.</text>
</comment>
<comment type="subcellular location">
    <subcellularLocation>
        <location evidence="1">Cytoplasm</location>
    </subcellularLocation>
</comment>
<comment type="similarity">
    <text evidence="1">Belongs to the type III pantothenate kinase family.</text>
</comment>
<organism>
    <name type="scientific">Leptospira interrogans serogroup Icterohaemorrhagiae serovar copenhageni (strain Fiocruz L1-130)</name>
    <dbReference type="NCBI Taxonomy" id="267671"/>
    <lineage>
        <taxon>Bacteria</taxon>
        <taxon>Pseudomonadati</taxon>
        <taxon>Spirochaetota</taxon>
        <taxon>Spirochaetia</taxon>
        <taxon>Leptospirales</taxon>
        <taxon>Leptospiraceae</taxon>
        <taxon>Leptospira</taxon>
    </lineage>
</organism>
<evidence type="ECO:0000255" key="1">
    <source>
        <dbReference type="HAMAP-Rule" id="MF_01274"/>
    </source>
</evidence>
<accession>Q72NP0</accession>
<reference key="1">
    <citation type="journal article" date="2004" name="J. Bacteriol.">
        <title>Comparative genomics of two Leptospira interrogans serovars reveals novel insights into physiology and pathogenesis.</title>
        <authorList>
            <person name="Nascimento A.L.T.O."/>
            <person name="Ko A.I."/>
            <person name="Martins E.A.L."/>
            <person name="Monteiro-Vitorello C.B."/>
            <person name="Ho P.L."/>
            <person name="Haake D.A."/>
            <person name="Verjovski-Almeida S."/>
            <person name="Hartskeerl R.A."/>
            <person name="Marques M.V."/>
            <person name="Oliveira M.C."/>
            <person name="Menck C.F.M."/>
            <person name="Leite L.C.C."/>
            <person name="Carrer H."/>
            <person name="Coutinho L.L."/>
            <person name="Degrave W.M."/>
            <person name="Dellagostin O.A."/>
            <person name="El-Dorry H."/>
            <person name="Ferro E.S."/>
            <person name="Ferro M.I.T."/>
            <person name="Furlan L.R."/>
            <person name="Gamberini M."/>
            <person name="Giglioti E.A."/>
            <person name="Goes-Neto A."/>
            <person name="Goldman G.H."/>
            <person name="Goldman M.H.S."/>
            <person name="Harakava R."/>
            <person name="Jeronimo S.M.B."/>
            <person name="Junqueira-de-Azevedo I.L.M."/>
            <person name="Kimura E.T."/>
            <person name="Kuramae E.E."/>
            <person name="Lemos E.G.M."/>
            <person name="Lemos M.V.F."/>
            <person name="Marino C.L."/>
            <person name="Nunes L.R."/>
            <person name="de Oliveira R.C."/>
            <person name="Pereira G.G."/>
            <person name="Reis M.S."/>
            <person name="Schriefer A."/>
            <person name="Siqueira W.J."/>
            <person name="Sommer P."/>
            <person name="Tsai S.M."/>
            <person name="Simpson A.J.G."/>
            <person name="Ferro J.A."/>
            <person name="Camargo L.E.A."/>
            <person name="Kitajima J.P."/>
            <person name="Setubal J.C."/>
            <person name="Van Sluys M.A."/>
        </authorList>
    </citation>
    <scope>NUCLEOTIDE SEQUENCE [LARGE SCALE GENOMIC DNA]</scope>
    <source>
        <strain>Fiocruz L1-130</strain>
    </source>
</reference>
<gene>
    <name evidence="1" type="primary">coaX</name>
    <name type="ordered locus">LIC_12792</name>
</gene>
<feature type="chain" id="PRO_0000267555" description="Type III pantothenate kinase">
    <location>
        <begin position="1"/>
        <end position="257"/>
    </location>
</feature>
<feature type="active site" description="Proton acceptor" evidence="1">
    <location>
        <position position="111"/>
    </location>
</feature>
<feature type="binding site" evidence="1">
    <location>
        <begin position="6"/>
        <end position="13"/>
    </location>
    <ligand>
        <name>ATP</name>
        <dbReference type="ChEBI" id="CHEBI:30616"/>
    </ligand>
</feature>
<feature type="binding site" evidence="1">
    <location>
        <position position="102"/>
    </location>
    <ligand>
        <name>substrate</name>
    </ligand>
</feature>
<feature type="binding site" evidence="1">
    <location>
        <begin position="109"/>
        <end position="112"/>
    </location>
    <ligand>
        <name>substrate</name>
    </ligand>
</feature>
<feature type="binding site" evidence="1">
    <location>
        <position position="131"/>
    </location>
    <ligand>
        <name>K(+)</name>
        <dbReference type="ChEBI" id="CHEBI:29103"/>
    </ligand>
</feature>
<feature type="binding site" evidence="1">
    <location>
        <position position="134"/>
    </location>
    <ligand>
        <name>ATP</name>
        <dbReference type="ChEBI" id="CHEBI:30616"/>
    </ligand>
</feature>
<feature type="binding site" evidence="1">
    <location>
        <position position="186"/>
    </location>
    <ligand>
        <name>substrate</name>
    </ligand>
</feature>